<organism>
    <name type="scientific">Staphylococcus aureus (strain MSSA476)</name>
    <dbReference type="NCBI Taxonomy" id="282459"/>
    <lineage>
        <taxon>Bacteria</taxon>
        <taxon>Bacillati</taxon>
        <taxon>Bacillota</taxon>
        <taxon>Bacilli</taxon>
        <taxon>Bacillales</taxon>
        <taxon>Staphylococcaceae</taxon>
        <taxon>Staphylococcus</taxon>
    </lineage>
</organism>
<proteinExistence type="inferred from homology"/>
<dbReference type="EC" id="2.3.1.-"/>
<dbReference type="EMBL" id="BX571857">
    <property type="protein sequence ID" value="CAG42283.1"/>
    <property type="molecule type" value="Genomic_DNA"/>
</dbReference>
<dbReference type="RefSeq" id="WP_000250823.1">
    <property type="nucleotide sequence ID" value="NC_002953.3"/>
</dbReference>
<dbReference type="SMR" id="Q6GBT7"/>
<dbReference type="KEGG" id="sas:SAS0508"/>
<dbReference type="HOGENOM" id="CLU_015846_11_0_9"/>
<dbReference type="GO" id="GO:0030170">
    <property type="term" value="F:pyridoxal phosphate binding"/>
    <property type="evidence" value="ECO:0007669"/>
    <property type="project" value="InterPro"/>
</dbReference>
<dbReference type="GO" id="GO:0016740">
    <property type="term" value="F:transferase activity"/>
    <property type="evidence" value="ECO:0007669"/>
    <property type="project" value="UniProtKB-KW"/>
</dbReference>
<dbReference type="GO" id="GO:0009058">
    <property type="term" value="P:biosynthetic process"/>
    <property type="evidence" value="ECO:0007669"/>
    <property type="project" value="InterPro"/>
</dbReference>
<dbReference type="CDD" id="cd06454">
    <property type="entry name" value="KBL_like"/>
    <property type="match status" value="1"/>
</dbReference>
<dbReference type="FunFam" id="3.40.640.10:FF:000006">
    <property type="entry name" value="5-aminolevulinate synthase, mitochondrial"/>
    <property type="match status" value="1"/>
</dbReference>
<dbReference type="Gene3D" id="3.90.1150.10">
    <property type="entry name" value="Aspartate Aminotransferase, domain 1"/>
    <property type="match status" value="1"/>
</dbReference>
<dbReference type="Gene3D" id="3.40.640.10">
    <property type="entry name" value="Type I PLP-dependent aspartate aminotransferase-like (Major domain)"/>
    <property type="match status" value="1"/>
</dbReference>
<dbReference type="InterPro" id="IPR001917">
    <property type="entry name" value="Aminotrans_II_pyridoxalP_BS"/>
</dbReference>
<dbReference type="InterPro" id="IPR004839">
    <property type="entry name" value="Aminotransferase_I/II_large"/>
</dbReference>
<dbReference type="InterPro" id="IPR050087">
    <property type="entry name" value="AON_synthase_class-II"/>
</dbReference>
<dbReference type="InterPro" id="IPR010962">
    <property type="entry name" value="AONS_Archaea/Firmicutes"/>
</dbReference>
<dbReference type="InterPro" id="IPR015424">
    <property type="entry name" value="PyrdxlP-dep_Trfase"/>
</dbReference>
<dbReference type="InterPro" id="IPR015421">
    <property type="entry name" value="PyrdxlP-dep_Trfase_major"/>
</dbReference>
<dbReference type="InterPro" id="IPR015422">
    <property type="entry name" value="PyrdxlP-dep_Trfase_small"/>
</dbReference>
<dbReference type="NCBIfam" id="TIGR01825">
    <property type="entry name" value="gly_Cac_T_rel"/>
    <property type="match status" value="1"/>
</dbReference>
<dbReference type="NCBIfam" id="NF005394">
    <property type="entry name" value="PRK06939.1"/>
    <property type="match status" value="1"/>
</dbReference>
<dbReference type="PANTHER" id="PTHR13693">
    <property type="entry name" value="CLASS II AMINOTRANSFERASE/8-AMINO-7-OXONONANOATE SYNTHASE"/>
    <property type="match status" value="1"/>
</dbReference>
<dbReference type="PANTHER" id="PTHR13693:SF3">
    <property type="entry name" value="LD36009P"/>
    <property type="match status" value="1"/>
</dbReference>
<dbReference type="Pfam" id="PF00155">
    <property type="entry name" value="Aminotran_1_2"/>
    <property type="match status" value="1"/>
</dbReference>
<dbReference type="SUPFAM" id="SSF53383">
    <property type="entry name" value="PLP-dependent transferases"/>
    <property type="match status" value="1"/>
</dbReference>
<dbReference type="PROSITE" id="PS00599">
    <property type="entry name" value="AA_TRANSFER_CLASS_2"/>
    <property type="match status" value="1"/>
</dbReference>
<keyword id="KW-0663">Pyridoxal phosphate</keyword>
<keyword id="KW-0808">Transferase</keyword>
<protein>
    <recommendedName>
        <fullName>Putative pyridoxal phosphate-dependent acyltransferase</fullName>
        <ecNumber>2.3.1.-</ecNumber>
    </recommendedName>
</protein>
<name>PPAT_STAAS</name>
<feature type="chain" id="PRO_0000163841" description="Putative pyridoxal phosphate-dependent acyltransferase">
    <location>
        <begin position="1"/>
        <end position="395"/>
    </location>
</feature>
<feature type="binding site" evidence="1">
    <location>
        <begin position="110"/>
        <end position="111"/>
    </location>
    <ligand>
        <name>pyridoxal 5'-phosphate</name>
        <dbReference type="ChEBI" id="CHEBI:597326"/>
    </ligand>
</feature>
<feature type="binding site" evidence="1">
    <location>
        <position position="135"/>
    </location>
    <ligand>
        <name>substrate</name>
    </ligand>
</feature>
<feature type="binding site" evidence="1">
    <location>
        <position position="185"/>
    </location>
    <ligand>
        <name>pyridoxal 5'-phosphate</name>
        <dbReference type="ChEBI" id="CHEBI:597326"/>
    </ligand>
</feature>
<feature type="binding site" evidence="1">
    <location>
        <begin position="210"/>
        <end position="213"/>
    </location>
    <ligand>
        <name>pyridoxal 5'-phosphate</name>
        <dbReference type="ChEBI" id="CHEBI:597326"/>
    </ligand>
</feature>
<feature type="binding site" evidence="1">
    <location>
        <begin position="240"/>
        <end position="243"/>
    </location>
    <ligand>
        <name>pyridoxal 5'-phosphate</name>
        <dbReference type="ChEBI" id="CHEBI:597326"/>
    </ligand>
</feature>
<feature type="binding site" evidence="1">
    <location>
        <position position="357"/>
    </location>
    <ligand>
        <name>substrate</name>
    </ligand>
</feature>
<feature type="modified residue" description="N6-(pyridoxal phosphate)lysine" evidence="2">
    <location>
        <position position="243"/>
    </location>
</feature>
<reference key="1">
    <citation type="journal article" date="2004" name="Proc. Natl. Acad. Sci. U.S.A.">
        <title>Complete genomes of two clinical Staphylococcus aureus strains: evidence for the rapid evolution of virulence and drug resistance.</title>
        <authorList>
            <person name="Holden M.T.G."/>
            <person name="Feil E.J."/>
            <person name="Lindsay J.A."/>
            <person name="Peacock S.J."/>
            <person name="Day N.P.J."/>
            <person name="Enright M.C."/>
            <person name="Foster T.J."/>
            <person name="Moore C.E."/>
            <person name="Hurst L."/>
            <person name="Atkin R."/>
            <person name="Barron A."/>
            <person name="Bason N."/>
            <person name="Bentley S.D."/>
            <person name="Chillingworth C."/>
            <person name="Chillingworth T."/>
            <person name="Churcher C."/>
            <person name="Clark L."/>
            <person name="Corton C."/>
            <person name="Cronin A."/>
            <person name="Doggett J."/>
            <person name="Dowd L."/>
            <person name="Feltwell T."/>
            <person name="Hance Z."/>
            <person name="Harris B."/>
            <person name="Hauser H."/>
            <person name="Holroyd S."/>
            <person name="Jagels K."/>
            <person name="James K.D."/>
            <person name="Lennard N."/>
            <person name="Line A."/>
            <person name="Mayes R."/>
            <person name="Moule S."/>
            <person name="Mungall K."/>
            <person name="Ormond D."/>
            <person name="Quail M.A."/>
            <person name="Rabbinowitsch E."/>
            <person name="Rutherford K.M."/>
            <person name="Sanders M."/>
            <person name="Sharp S."/>
            <person name="Simmonds M."/>
            <person name="Stevens K."/>
            <person name="Whitehead S."/>
            <person name="Barrell B.G."/>
            <person name="Spratt B.G."/>
            <person name="Parkhill J."/>
        </authorList>
    </citation>
    <scope>NUCLEOTIDE SEQUENCE [LARGE SCALE GENOMIC DNA]</scope>
    <source>
        <strain>MSSA476</strain>
    </source>
</reference>
<sequence length="395" mass="42892">MVQSLHEFLEENINYLKENGLYNEIDTIEGANGPEIKINGKSYINLSSNNYLGLATNEDLKSAAKAAIDTHGVGAGAVRTINGTLDLHDELEETLAKFKGTEAAIAYQSGFNCNMAAISAVMNKNDAILSDELNHASIIDGCRLSKAKIIRVNHSDMDDLRAKAKEAVESGQYNKVMYITDGVFSMDGDVAKLPEIVEIAEEFGLLTYVDDAHGSGVMGKGAGTVKHFGLQDKIDFQIGTLSKAIGVVGGYVAGTKELIDWLKAQSRPFLFSTSLAPGDTKAITEAVKKLMDSTELHDKLWDNAQYLKNGLSKLGYDTGESETPITPVIIGDEKTTQEFSKRLKDEGVYVKSIVFPTVPRGTGRVRNMPTAAHTKDMLDEAIAAYEKVGKEMKLI</sequence>
<accession>Q6GBT7</accession>
<comment type="cofactor">
    <cofactor evidence="1">
        <name>pyridoxal 5'-phosphate</name>
        <dbReference type="ChEBI" id="CHEBI:597326"/>
    </cofactor>
</comment>
<comment type="subunit">
    <text evidence="1">Homodimer.</text>
</comment>
<comment type="similarity">
    <text evidence="2">Belongs to the class-II pyridoxal-phosphate-dependent aminotransferase family.</text>
</comment>
<evidence type="ECO:0000250" key="1"/>
<evidence type="ECO:0000305" key="2"/>
<gene>
    <name type="ordered locus">SAS0508</name>
</gene>